<keyword id="KW-0963">Cytoplasm</keyword>
<keyword id="KW-0444">Lipid biosynthesis</keyword>
<keyword id="KW-0443">Lipid metabolism</keyword>
<keyword id="KW-0594">Phospholipid biosynthesis</keyword>
<keyword id="KW-1208">Phospholipid metabolism</keyword>
<keyword id="KW-1185">Reference proteome</keyword>
<keyword id="KW-0808">Transferase</keyword>
<feature type="chain" id="PRO_0000329256" description="Phosphate acyltransferase">
    <location>
        <begin position="1"/>
        <end position="356"/>
    </location>
</feature>
<sequence>MSAPVIAIDAMGGDFGPHCIVPASLSCLAENPSLHLVLVGQSSLLEQLVAKHPGVDRARLKIVDAPEMVTMDERPAQALRGKPRSSMRVALEQVRDGGAQACVSAGNTGALMALARQVLKTLPGIDRPAMVTALPTRGAPCLLLDLGANVDCPAEQLYQFAVMGAVAAESLGRQQPRVALLNVGTEEIKGNQQVKLAAALLQQAAGLNYRGFIEGDGLYRGEADVVVCDGFVGNILLKSSEGLAGMLVAKVEALFRRSIAARIVGAVALPLLRRLRAELNPAQYNGASFLGLQGIVVKSHGSAGADGFKAAIRRAAQDVEHDLPAQLRDRLGQFFRVDGSSGGTDDVTARDGWPSN</sequence>
<protein>
    <recommendedName>
        <fullName evidence="1">Phosphate acyltransferase</fullName>
        <ecNumber evidence="1">2.3.1.274</ecNumber>
    </recommendedName>
    <alternativeName>
        <fullName evidence="1">Acyl-ACP phosphotransacylase</fullName>
    </alternativeName>
    <alternativeName>
        <fullName evidence="1">Acyl-[acyl-carrier-protein]--phosphate acyltransferase</fullName>
    </alternativeName>
    <alternativeName>
        <fullName evidence="1">Phosphate-acyl-ACP acyltransferase</fullName>
    </alternativeName>
</protein>
<comment type="function">
    <text evidence="1">Catalyzes the reversible formation of acyl-phosphate (acyl-PO(4)) from acyl-[acyl-carrier-protein] (acyl-ACP). This enzyme utilizes acyl-ACP as fatty acyl donor, but not acyl-CoA.</text>
</comment>
<comment type="catalytic activity">
    <reaction evidence="1">
        <text>a fatty acyl-[ACP] + phosphate = an acyl phosphate + holo-[ACP]</text>
        <dbReference type="Rhea" id="RHEA:42292"/>
        <dbReference type="Rhea" id="RHEA-COMP:9685"/>
        <dbReference type="Rhea" id="RHEA-COMP:14125"/>
        <dbReference type="ChEBI" id="CHEBI:43474"/>
        <dbReference type="ChEBI" id="CHEBI:59918"/>
        <dbReference type="ChEBI" id="CHEBI:64479"/>
        <dbReference type="ChEBI" id="CHEBI:138651"/>
        <dbReference type="EC" id="2.3.1.274"/>
    </reaction>
</comment>
<comment type="pathway">
    <text evidence="1">Lipid metabolism; phospholipid metabolism.</text>
</comment>
<comment type="subunit">
    <text evidence="1">Homodimer. Probably interacts with PlsY.</text>
</comment>
<comment type="subcellular location">
    <subcellularLocation>
        <location evidence="1">Cytoplasm</location>
    </subcellularLocation>
    <text evidence="1">Associated with the membrane possibly through PlsY.</text>
</comment>
<comment type="similarity">
    <text evidence="1">Belongs to the PlsX family.</text>
</comment>
<comment type="sequence caution" evidence="2">
    <conflict type="erroneous initiation">
        <sequence resource="EMBL-CDS" id="ABP80274"/>
    </conflict>
</comment>
<proteinExistence type="inferred from homology"/>
<name>PLSX_STUS1</name>
<organism>
    <name type="scientific">Stutzerimonas stutzeri (strain A1501)</name>
    <name type="common">Pseudomonas stutzeri</name>
    <dbReference type="NCBI Taxonomy" id="379731"/>
    <lineage>
        <taxon>Bacteria</taxon>
        <taxon>Pseudomonadati</taxon>
        <taxon>Pseudomonadota</taxon>
        <taxon>Gammaproteobacteria</taxon>
        <taxon>Pseudomonadales</taxon>
        <taxon>Pseudomonadaceae</taxon>
        <taxon>Stutzerimonas</taxon>
    </lineage>
</organism>
<accession>A4VMS3</accession>
<reference key="1">
    <citation type="journal article" date="2008" name="Proc. Natl. Acad. Sci. U.S.A.">
        <title>Nitrogen fixation island and rhizosphere competence traits in the genome of root-associated Pseudomonas stutzeri A1501.</title>
        <authorList>
            <person name="Yan Y."/>
            <person name="Yang J."/>
            <person name="Dou Y."/>
            <person name="Chen M."/>
            <person name="Ping S."/>
            <person name="Peng J."/>
            <person name="Lu W."/>
            <person name="Zhang W."/>
            <person name="Yao Z."/>
            <person name="Li H."/>
            <person name="Liu W."/>
            <person name="He S."/>
            <person name="Geng L."/>
            <person name="Zhang X."/>
            <person name="Yang F."/>
            <person name="Yu H."/>
            <person name="Zhan Y."/>
            <person name="Li D."/>
            <person name="Lin Z."/>
            <person name="Wang Y."/>
            <person name="Elmerich C."/>
            <person name="Lin M."/>
            <person name="Jin Q."/>
        </authorList>
    </citation>
    <scope>NUCLEOTIDE SEQUENCE [LARGE SCALE GENOMIC DNA]</scope>
    <source>
        <strain>A1501</strain>
    </source>
</reference>
<evidence type="ECO:0000255" key="1">
    <source>
        <dbReference type="HAMAP-Rule" id="MF_00019"/>
    </source>
</evidence>
<evidence type="ECO:0000305" key="2"/>
<gene>
    <name evidence="1" type="primary">plsX</name>
    <name type="ordered locus">PST_2624</name>
</gene>
<dbReference type="EC" id="2.3.1.274" evidence="1"/>
<dbReference type="EMBL" id="CP000304">
    <property type="protein sequence ID" value="ABP80274.1"/>
    <property type="status" value="ALT_INIT"/>
    <property type="molecule type" value="Genomic_DNA"/>
</dbReference>
<dbReference type="RefSeq" id="WP_013983249.1">
    <property type="nucleotide sequence ID" value="NC_009434.1"/>
</dbReference>
<dbReference type="SMR" id="A4VMS3"/>
<dbReference type="GeneID" id="66821941"/>
<dbReference type="KEGG" id="psa:PST_2624"/>
<dbReference type="eggNOG" id="COG0416">
    <property type="taxonomic scope" value="Bacteria"/>
</dbReference>
<dbReference type="HOGENOM" id="CLU_039379_1_0_6"/>
<dbReference type="UniPathway" id="UPA00085"/>
<dbReference type="Proteomes" id="UP000000233">
    <property type="component" value="Chromosome"/>
</dbReference>
<dbReference type="GO" id="GO:0005737">
    <property type="term" value="C:cytoplasm"/>
    <property type="evidence" value="ECO:0007669"/>
    <property type="project" value="UniProtKB-SubCell"/>
</dbReference>
<dbReference type="GO" id="GO:0043811">
    <property type="term" value="F:phosphate:acyl-[acyl carrier protein] acyltransferase activity"/>
    <property type="evidence" value="ECO:0007669"/>
    <property type="project" value="UniProtKB-UniRule"/>
</dbReference>
<dbReference type="GO" id="GO:0006633">
    <property type="term" value="P:fatty acid biosynthetic process"/>
    <property type="evidence" value="ECO:0007669"/>
    <property type="project" value="UniProtKB-UniRule"/>
</dbReference>
<dbReference type="GO" id="GO:0008654">
    <property type="term" value="P:phospholipid biosynthetic process"/>
    <property type="evidence" value="ECO:0007669"/>
    <property type="project" value="UniProtKB-KW"/>
</dbReference>
<dbReference type="Gene3D" id="3.40.718.10">
    <property type="entry name" value="Isopropylmalate Dehydrogenase"/>
    <property type="match status" value="1"/>
</dbReference>
<dbReference type="HAMAP" id="MF_00019">
    <property type="entry name" value="PlsX"/>
    <property type="match status" value="1"/>
</dbReference>
<dbReference type="InterPro" id="IPR003664">
    <property type="entry name" value="FA_synthesis"/>
</dbReference>
<dbReference type="InterPro" id="IPR012281">
    <property type="entry name" value="Phospholipid_synth_PlsX-like"/>
</dbReference>
<dbReference type="NCBIfam" id="TIGR00182">
    <property type="entry name" value="plsX"/>
    <property type="match status" value="1"/>
</dbReference>
<dbReference type="PANTHER" id="PTHR30100">
    <property type="entry name" value="FATTY ACID/PHOSPHOLIPID SYNTHESIS PROTEIN PLSX"/>
    <property type="match status" value="1"/>
</dbReference>
<dbReference type="PANTHER" id="PTHR30100:SF1">
    <property type="entry name" value="PHOSPHATE ACYLTRANSFERASE"/>
    <property type="match status" value="1"/>
</dbReference>
<dbReference type="Pfam" id="PF02504">
    <property type="entry name" value="FA_synthesis"/>
    <property type="match status" value="1"/>
</dbReference>
<dbReference type="PIRSF" id="PIRSF002465">
    <property type="entry name" value="Phsphlp_syn_PlsX"/>
    <property type="match status" value="1"/>
</dbReference>
<dbReference type="SUPFAM" id="SSF53659">
    <property type="entry name" value="Isocitrate/Isopropylmalate dehydrogenase-like"/>
    <property type="match status" value="1"/>
</dbReference>